<sequence length="291" mass="32154">MERLFKHICLVARHSKPGITPALMQLANHLAAGGATVLIDKESVTPDEANGYPLIDRTDMGKLADLCIVLGGDGTMLSIARLLAPYRVPLVGINQGRLGFMTDIPLHEMLDSVDAILHGKFVPEDRILLQAAVVREDAEVASALAFNDVVFSRGAVGSMIEFEVFIDNQFVYSQRSDGLIVSTPTGSTAYSLASGGPILHPTLQAIALVPICPQSLSNRPIAVNDSCEVEFMLTRGLDARVHFDGQLHCDLMEMDRVLIRRYRNPLRILHPEGYNYYDMLRHKLHWGERLI</sequence>
<evidence type="ECO:0000255" key="1">
    <source>
        <dbReference type="HAMAP-Rule" id="MF_00361"/>
    </source>
</evidence>
<accession>Q7NVM0</accession>
<name>NADK_CHRVO</name>
<proteinExistence type="inferred from homology"/>
<dbReference type="EC" id="2.7.1.23" evidence="1"/>
<dbReference type="EMBL" id="AE016825">
    <property type="protein sequence ID" value="AAQ59994.1"/>
    <property type="molecule type" value="Genomic_DNA"/>
</dbReference>
<dbReference type="RefSeq" id="WP_011135869.1">
    <property type="nucleotide sequence ID" value="NC_005085.1"/>
</dbReference>
<dbReference type="SMR" id="Q7NVM0"/>
<dbReference type="STRING" id="243365.CV_2322"/>
<dbReference type="KEGG" id="cvi:CV_2322"/>
<dbReference type="eggNOG" id="COG0061">
    <property type="taxonomic scope" value="Bacteria"/>
</dbReference>
<dbReference type="HOGENOM" id="CLU_008831_0_1_4"/>
<dbReference type="OrthoDB" id="9774737at2"/>
<dbReference type="Proteomes" id="UP000001424">
    <property type="component" value="Chromosome"/>
</dbReference>
<dbReference type="GO" id="GO:0005737">
    <property type="term" value="C:cytoplasm"/>
    <property type="evidence" value="ECO:0007669"/>
    <property type="project" value="UniProtKB-SubCell"/>
</dbReference>
<dbReference type="GO" id="GO:0005524">
    <property type="term" value="F:ATP binding"/>
    <property type="evidence" value="ECO:0007669"/>
    <property type="project" value="UniProtKB-KW"/>
</dbReference>
<dbReference type="GO" id="GO:0046872">
    <property type="term" value="F:metal ion binding"/>
    <property type="evidence" value="ECO:0007669"/>
    <property type="project" value="UniProtKB-UniRule"/>
</dbReference>
<dbReference type="GO" id="GO:0051287">
    <property type="term" value="F:NAD binding"/>
    <property type="evidence" value="ECO:0007669"/>
    <property type="project" value="UniProtKB-ARBA"/>
</dbReference>
<dbReference type="GO" id="GO:0003951">
    <property type="term" value="F:NAD+ kinase activity"/>
    <property type="evidence" value="ECO:0007669"/>
    <property type="project" value="UniProtKB-UniRule"/>
</dbReference>
<dbReference type="GO" id="GO:0019674">
    <property type="term" value="P:NAD metabolic process"/>
    <property type="evidence" value="ECO:0007669"/>
    <property type="project" value="InterPro"/>
</dbReference>
<dbReference type="GO" id="GO:0006741">
    <property type="term" value="P:NADP biosynthetic process"/>
    <property type="evidence" value="ECO:0007669"/>
    <property type="project" value="UniProtKB-UniRule"/>
</dbReference>
<dbReference type="Gene3D" id="3.40.50.10330">
    <property type="entry name" value="Probable inorganic polyphosphate/atp-NAD kinase, domain 1"/>
    <property type="match status" value="1"/>
</dbReference>
<dbReference type="Gene3D" id="2.60.200.30">
    <property type="entry name" value="Probable inorganic polyphosphate/atp-NAD kinase, domain 2"/>
    <property type="match status" value="1"/>
</dbReference>
<dbReference type="HAMAP" id="MF_00361">
    <property type="entry name" value="NAD_kinase"/>
    <property type="match status" value="1"/>
</dbReference>
<dbReference type="InterPro" id="IPR017438">
    <property type="entry name" value="ATP-NAD_kinase_N"/>
</dbReference>
<dbReference type="InterPro" id="IPR017437">
    <property type="entry name" value="ATP-NAD_kinase_PpnK-typ_C"/>
</dbReference>
<dbReference type="InterPro" id="IPR016064">
    <property type="entry name" value="NAD/diacylglycerol_kinase_sf"/>
</dbReference>
<dbReference type="InterPro" id="IPR002504">
    <property type="entry name" value="NADK"/>
</dbReference>
<dbReference type="NCBIfam" id="NF002306">
    <property type="entry name" value="PRK01231.1"/>
    <property type="match status" value="1"/>
</dbReference>
<dbReference type="NCBIfam" id="NF002561">
    <property type="entry name" value="PRK02155.1"/>
    <property type="match status" value="1"/>
</dbReference>
<dbReference type="NCBIfam" id="NF003391">
    <property type="entry name" value="PRK04539.1"/>
    <property type="match status" value="1"/>
</dbReference>
<dbReference type="PANTHER" id="PTHR20275">
    <property type="entry name" value="NAD KINASE"/>
    <property type="match status" value="1"/>
</dbReference>
<dbReference type="PANTHER" id="PTHR20275:SF0">
    <property type="entry name" value="NAD KINASE"/>
    <property type="match status" value="1"/>
</dbReference>
<dbReference type="Pfam" id="PF01513">
    <property type="entry name" value="NAD_kinase"/>
    <property type="match status" value="1"/>
</dbReference>
<dbReference type="Pfam" id="PF20143">
    <property type="entry name" value="NAD_kinase_C"/>
    <property type="match status" value="1"/>
</dbReference>
<dbReference type="SUPFAM" id="SSF111331">
    <property type="entry name" value="NAD kinase/diacylglycerol kinase-like"/>
    <property type="match status" value="1"/>
</dbReference>
<keyword id="KW-0067">ATP-binding</keyword>
<keyword id="KW-0963">Cytoplasm</keyword>
<keyword id="KW-0418">Kinase</keyword>
<keyword id="KW-0520">NAD</keyword>
<keyword id="KW-0521">NADP</keyword>
<keyword id="KW-0547">Nucleotide-binding</keyword>
<keyword id="KW-1185">Reference proteome</keyword>
<keyword id="KW-0808">Transferase</keyword>
<organism>
    <name type="scientific">Chromobacterium violaceum (strain ATCC 12472 / DSM 30191 / JCM 1249 / CCUG 213 / NBRC 12614 / NCIMB 9131 / NCTC 9757 / MK)</name>
    <dbReference type="NCBI Taxonomy" id="243365"/>
    <lineage>
        <taxon>Bacteria</taxon>
        <taxon>Pseudomonadati</taxon>
        <taxon>Pseudomonadota</taxon>
        <taxon>Betaproteobacteria</taxon>
        <taxon>Neisseriales</taxon>
        <taxon>Chromobacteriaceae</taxon>
        <taxon>Chromobacterium</taxon>
    </lineage>
</organism>
<comment type="function">
    <text evidence="1">Involved in the regulation of the intracellular balance of NAD and NADP, and is a key enzyme in the biosynthesis of NADP. Catalyzes specifically the phosphorylation on 2'-hydroxyl of the adenosine moiety of NAD to yield NADP.</text>
</comment>
<comment type="catalytic activity">
    <reaction evidence="1">
        <text>NAD(+) + ATP = ADP + NADP(+) + H(+)</text>
        <dbReference type="Rhea" id="RHEA:18629"/>
        <dbReference type="ChEBI" id="CHEBI:15378"/>
        <dbReference type="ChEBI" id="CHEBI:30616"/>
        <dbReference type="ChEBI" id="CHEBI:57540"/>
        <dbReference type="ChEBI" id="CHEBI:58349"/>
        <dbReference type="ChEBI" id="CHEBI:456216"/>
        <dbReference type="EC" id="2.7.1.23"/>
    </reaction>
</comment>
<comment type="cofactor">
    <cofactor evidence="1">
        <name>a divalent metal cation</name>
        <dbReference type="ChEBI" id="CHEBI:60240"/>
    </cofactor>
</comment>
<comment type="subcellular location">
    <subcellularLocation>
        <location evidence="1">Cytoplasm</location>
    </subcellularLocation>
</comment>
<comment type="similarity">
    <text evidence="1">Belongs to the NAD kinase family.</text>
</comment>
<protein>
    <recommendedName>
        <fullName evidence="1">NAD kinase</fullName>
        <ecNumber evidence="1">2.7.1.23</ecNumber>
    </recommendedName>
    <alternativeName>
        <fullName evidence="1">ATP-dependent NAD kinase</fullName>
    </alternativeName>
</protein>
<feature type="chain" id="PRO_0000229624" description="NAD kinase">
    <location>
        <begin position="1"/>
        <end position="291"/>
    </location>
</feature>
<feature type="active site" description="Proton acceptor" evidence="1">
    <location>
        <position position="73"/>
    </location>
</feature>
<feature type="binding site" evidence="1">
    <location>
        <begin position="73"/>
        <end position="74"/>
    </location>
    <ligand>
        <name>NAD(+)</name>
        <dbReference type="ChEBI" id="CHEBI:57540"/>
    </ligand>
</feature>
<feature type="binding site" evidence="1">
    <location>
        <begin position="147"/>
        <end position="148"/>
    </location>
    <ligand>
        <name>NAD(+)</name>
        <dbReference type="ChEBI" id="CHEBI:57540"/>
    </ligand>
</feature>
<feature type="binding site" evidence="1">
    <location>
        <position position="175"/>
    </location>
    <ligand>
        <name>NAD(+)</name>
        <dbReference type="ChEBI" id="CHEBI:57540"/>
    </ligand>
</feature>
<feature type="binding site" evidence="1">
    <location>
        <position position="177"/>
    </location>
    <ligand>
        <name>NAD(+)</name>
        <dbReference type="ChEBI" id="CHEBI:57540"/>
    </ligand>
</feature>
<feature type="binding site" evidence="1">
    <location>
        <position position="246"/>
    </location>
    <ligand>
        <name>NAD(+)</name>
        <dbReference type="ChEBI" id="CHEBI:57540"/>
    </ligand>
</feature>
<reference key="1">
    <citation type="journal article" date="2003" name="Proc. Natl. Acad. Sci. U.S.A.">
        <title>The complete genome sequence of Chromobacterium violaceum reveals remarkable and exploitable bacterial adaptability.</title>
        <authorList>
            <person name="Vasconcelos A.T.R."/>
            <person name="de Almeida D.F."/>
            <person name="Hungria M."/>
            <person name="Guimaraes C.T."/>
            <person name="Antonio R.V."/>
            <person name="Almeida F.C."/>
            <person name="de Almeida L.G.P."/>
            <person name="de Almeida R."/>
            <person name="Alves-Gomes J.A."/>
            <person name="Andrade E.M."/>
            <person name="Araripe J."/>
            <person name="de Araujo M.F.F."/>
            <person name="Astolfi-Filho S."/>
            <person name="Azevedo V."/>
            <person name="Baptista A.J."/>
            <person name="Bataus L.A.M."/>
            <person name="Batista J.S."/>
            <person name="Belo A."/>
            <person name="van den Berg C."/>
            <person name="Bogo M."/>
            <person name="Bonatto S."/>
            <person name="Bordignon J."/>
            <person name="Brigido M.M."/>
            <person name="Brito C.A."/>
            <person name="Brocchi M."/>
            <person name="Burity H.A."/>
            <person name="Camargo A.A."/>
            <person name="Cardoso D.D.P."/>
            <person name="Carneiro N.P."/>
            <person name="Carraro D.M."/>
            <person name="Carvalho C.M.B."/>
            <person name="Cascardo J.C.M."/>
            <person name="Cavada B.S."/>
            <person name="Chueire L.M.O."/>
            <person name="Creczynski-Pasa T.B."/>
            <person name="Cunha-Junior N.C."/>
            <person name="Fagundes N."/>
            <person name="Falcao C.L."/>
            <person name="Fantinatti F."/>
            <person name="Farias I.P."/>
            <person name="Felipe M.S.S."/>
            <person name="Ferrari L.P."/>
            <person name="Ferro J.A."/>
            <person name="Ferro M.I.T."/>
            <person name="Franco G.R."/>
            <person name="Freitas N.S.A."/>
            <person name="Furlan L.R."/>
            <person name="Gazzinelli R.T."/>
            <person name="Gomes E.A."/>
            <person name="Goncalves P.R."/>
            <person name="Grangeiro T.B."/>
            <person name="Grattapaglia D."/>
            <person name="Grisard E.C."/>
            <person name="Hanna E.S."/>
            <person name="Jardim S.N."/>
            <person name="Laurino J."/>
            <person name="Leoi L.C.T."/>
            <person name="Lima L.F.A."/>
            <person name="Loureiro M.F."/>
            <person name="Lyra M.C.C.P."/>
            <person name="Madeira H.M.F."/>
            <person name="Manfio G.P."/>
            <person name="Maranhao A.Q."/>
            <person name="Martins W.S."/>
            <person name="di Mauro S.M.Z."/>
            <person name="de Medeiros S.R.B."/>
            <person name="Meissner R.V."/>
            <person name="Moreira M.A.M."/>
            <person name="Nascimento F.F."/>
            <person name="Nicolas M.F."/>
            <person name="Oliveira J.G."/>
            <person name="Oliveira S.C."/>
            <person name="Paixao R.F.C."/>
            <person name="Parente J.A."/>
            <person name="Pedrosa F.O."/>
            <person name="Pena S.D.J."/>
            <person name="Pereira J.O."/>
            <person name="Pereira M."/>
            <person name="Pinto L.S.R.C."/>
            <person name="Pinto L.S."/>
            <person name="Porto J.I.R."/>
            <person name="Potrich D.P."/>
            <person name="Ramalho-Neto C.E."/>
            <person name="Reis A.M.M."/>
            <person name="Rigo L.U."/>
            <person name="Rondinelli E."/>
            <person name="Santos E.B.P."/>
            <person name="Santos F.R."/>
            <person name="Schneider M.P.C."/>
            <person name="Seuanez H.N."/>
            <person name="Silva A.M.R."/>
            <person name="da Silva A.L.C."/>
            <person name="Silva D.W."/>
            <person name="Silva R."/>
            <person name="Simoes I.C."/>
            <person name="Simon D."/>
            <person name="Soares C.M.A."/>
            <person name="Soares R.B.A."/>
            <person name="Souza E.M."/>
            <person name="Souza K.R.L."/>
            <person name="Souza R.C."/>
            <person name="Steffens M.B.R."/>
            <person name="Steindel M."/>
            <person name="Teixeira S.R."/>
            <person name="Urmenyi T."/>
            <person name="Vettore A."/>
            <person name="Wassem R."/>
            <person name="Zaha A."/>
            <person name="Simpson A.J.G."/>
        </authorList>
    </citation>
    <scope>NUCLEOTIDE SEQUENCE [LARGE SCALE GENOMIC DNA]</scope>
    <source>
        <strain>ATCC 12472 / DSM 30191 / JCM 1249 / CCUG 213 / NBRC 12614 / NCIMB 9131 / NCTC 9757 / MK</strain>
    </source>
</reference>
<gene>
    <name evidence="1" type="primary">nadK</name>
    <name type="ordered locus">CV_2322</name>
</gene>